<evidence type="ECO:0000255" key="1">
    <source>
        <dbReference type="HAMAP-Rule" id="MF_00743"/>
    </source>
</evidence>
<sequence>MICNRLWGDQTESSLKFFNISTEKMPWELIKALAQIKRVSAQVNYDLKLLDYERSQAIIAAVDEILSGNHKNEFPLSVWQTGSGTQSNMNMNEVLANRANELLRKNQINIVVHPNDHVNKSQSSNDVFPSAMHIAAVVNLKTKLIPVIKLLQKTFLKKSIEFRNIIKIGRTHLQDAIPLTLGQEISGWDFMLKNNTNHIQSTILDLSALALGGTAVGTGFSAHVEYAERVVLGLSKLIHHSFFSAPNKFESLSTCDAIVYSHGTLKGLAISMMKIANDIRLLSSGPQCGLGELIIPANEPGSSIMPGKVNPTQCESMTMSCCQVMGNDLSISLGGSSGQLQLNTYRPLIIYNFLQSIRLLTDSIKNFHDYCIVGIRPKFKRIEKLLNKSLMLVTALSSHIGYDKSAQIAQTAYLNGITLKAASIQSGYVTEKQFDDWVCPENMIYPDM</sequence>
<organism>
    <name type="scientific">Blochmanniella floridana</name>
    <dbReference type="NCBI Taxonomy" id="203907"/>
    <lineage>
        <taxon>Bacteria</taxon>
        <taxon>Pseudomonadati</taxon>
        <taxon>Pseudomonadota</taxon>
        <taxon>Gammaproteobacteria</taxon>
        <taxon>Enterobacterales</taxon>
        <taxon>Enterobacteriaceae</taxon>
        <taxon>ant endosymbionts</taxon>
        <taxon>Candidatus Blochmanniella</taxon>
    </lineage>
</organism>
<protein>
    <recommendedName>
        <fullName evidence="1">Fumarate hydratase class II</fullName>
        <shortName evidence="1">Fumarase C</shortName>
        <ecNumber evidence="1">4.2.1.2</ecNumber>
    </recommendedName>
    <alternativeName>
        <fullName evidence="1">Aerobic fumarase</fullName>
    </alternativeName>
    <alternativeName>
        <fullName evidence="1">Iron-independent fumarase</fullName>
    </alternativeName>
</protein>
<comment type="function">
    <text evidence="1">Involved in the TCA cycle. Catalyzes the stereospecific interconversion of fumarate to L-malate.</text>
</comment>
<comment type="catalytic activity">
    <reaction evidence="1">
        <text>(S)-malate = fumarate + H2O</text>
        <dbReference type="Rhea" id="RHEA:12460"/>
        <dbReference type="ChEBI" id="CHEBI:15377"/>
        <dbReference type="ChEBI" id="CHEBI:15589"/>
        <dbReference type="ChEBI" id="CHEBI:29806"/>
        <dbReference type="EC" id="4.2.1.2"/>
    </reaction>
</comment>
<comment type="pathway">
    <text evidence="1">Carbohydrate metabolism; tricarboxylic acid cycle; (S)-malate from fumarate: step 1/1.</text>
</comment>
<comment type="subunit">
    <text evidence="1">Homotetramer.</text>
</comment>
<comment type="subcellular location">
    <subcellularLocation>
        <location evidence="1">Cytoplasm</location>
    </subcellularLocation>
</comment>
<comment type="miscellaneous">
    <text evidence="1">There are 2 substrate-binding sites: the catalytic A site, and the non-catalytic B site that may play a role in the transfer of substrate or product between the active site and the solvent. Alternatively, the B site may bind allosteric effectors.</text>
</comment>
<comment type="similarity">
    <text evidence="1">Belongs to the class-II fumarase/aspartase family. Fumarase subfamily.</text>
</comment>
<name>FUMC_BLOFL</name>
<feature type="chain" id="PRO_0000161264" description="Fumarate hydratase class II">
    <location>
        <begin position="1"/>
        <end position="448"/>
    </location>
</feature>
<feature type="active site" description="Proton donor/acceptor" evidence="1">
    <location>
        <position position="172"/>
    </location>
</feature>
<feature type="active site" evidence="1">
    <location>
        <position position="302"/>
    </location>
</feature>
<feature type="binding site" evidence="1">
    <location>
        <begin position="83"/>
        <end position="85"/>
    </location>
    <ligand>
        <name>substrate</name>
    </ligand>
</feature>
<feature type="binding site" description="in site B" evidence="1">
    <location>
        <begin position="113"/>
        <end position="116"/>
    </location>
    <ligand>
        <name>substrate</name>
    </ligand>
</feature>
<feature type="binding site" evidence="1">
    <location>
        <begin position="123"/>
        <end position="125"/>
    </location>
    <ligand>
        <name>substrate</name>
    </ligand>
</feature>
<feature type="binding site" evidence="1">
    <location>
        <position position="171"/>
    </location>
    <ligand>
        <name>substrate</name>
    </ligand>
</feature>
<feature type="binding site" evidence="1">
    <location>
        <position position="303"/>
    </location>
    <ligand>
        <name>substrate</name>
    </ligand>
</feature>
<feature type="binding site" evidence="1">
    <location>
        <begin position="308"/>
        <end position="310"/>
    </location>
    <ligand>
        <name>substrate</name>
    </ligand>
</feature>
<feature type="site" description="Important for catalytic activity" evidence="1">
    <location>
        <position position="315"/>
    </location>
</feature>
<reference key="1">
    <citation type="journal article" date="2003" name="Proc. Natl. Acad. Sci. U.S.A.">
        <title>The genome sequence of Blochmannia floridanus: comparative analysis of reduced genomes.</title>
        <authorList>
            <person name="Gil R."/>
            <person name="Silva F.J."/>
            <person name="Zientz E."/>
            <person name="Delmotte F."/>
            <person name="Gonzalez-Candelas F."/>
            <person name="Latorre A."/>
            <person name="Rausell C."/>
            <person name="Kamerbeek J."/>
            <person name="Gadau J."/>
            <person name="Hoelldobler B."/>
            <person name="van Ham R.C.H.J."/>
            <person name="Gross R."/>
            <person name="Moya A."/>
        </authorList>
    </citation>
    <scope>NUCLEOTIDE SEQUENCE [LARGE SCALE GENOMIC DNA]</scope>
</reference>
<accession>Q7VR50</accession>
<dbReference type="EC" id="4.2.1.2" evidence="1"/>
<dbReference type="EMBL" id="BX248583">
    <property type="protein sequence ID" value="CAD83439.1"/>
    <property type="molecule type" value="Genomic_DNA"/>
</dbReference>
<dbReference type="SMR" id="Q7VR50"/>
<dbReference type="STRING" id="203907.Bfl373"/>
<dbReference type="KEGG" id="bfl:Bfl373"/>
<dbReference type="eggNOG" id="COG0114">
    <property type="taxonomic scope" value="Bacteria"/>
</dbReference>
<dbReference type="HOGENOM" id="CLU_021594_4_1_6"/>
<dbReference type="OrthoDB" id="9802809at2"/>
<dbReference type="UniPathway" id="UPA00223">
    <property type="reaction ID" value="UER01007"/>
</dbReference>
<dbReference type="Proteomes" id="UP000002192">
    <property type="component" value="Chromosome"/>
</dbReference>
<dbReference type="GO" id="GO:0005737">
    <property type="term" value="C:cytoplasm"/>
    <property type="evidence" value="ECO:0007669"/>
    <property type="project" value="UniProtKB-SubCell"/>
</dbReference>
<dbReference type="GO" id="GO:0004333">
    <property type="term" value="F:fumarate hydratase activity"/>
    <property type="evidence" value="ECO:0007669"/>
    <property type="project" value="UniProtKB-UniRule"/>
</dbReference>
<dbReference type="GO" id="GO:0006106">
    <property type="term" value="P:fumarate metabolic process"/>
    <property type="evidence" value="ECO:0007669"/>
    <property type="project" value="InterPro"/>
</dbReference>
<dbReference type="GO" id="GO:0006108">
    <property type="term" value="P:malate metabolic process"/>
    <property type="evidence" value="ECO:0007669"/>
    <property type="project" value="TreeGrafter"/>
</dbReference>
<dbReference type="GO" id="GO:0006099">
    <property type="term" value="P:tricarboxylic acid cycle"/>
    <property type="evidence" value="ECO:0007669"/>
    <property type="project" value="UniProtKB-UniRule"/>
</dbReference>
<dbReference type="CDD" id="cd01362">
    <property type="entry name" value="Fumarase_classII"/>
    <property type="match status" value="1"/>
</dbReference>
<dbReference type="FunFam" id="1.10.40.30:FF:000002">
    <property type="entry name" value="Fumarate hydratase class II"/>
    <property type="match status" value="1"/>
</dbReference>
<dbReference type="FunFam" id="1.20.200.10:FF:000001">
    <property type="entry name" value="Fumarate hydratase, mitochondrial"/>
    <property type="match status" value="1"/>
</dbReference>
<dbReference type="Gene3D" id="1.10.40.30">
    <property type="entry name" value="Fumarase/aspartase (C-terminal domain)"/>
    <property type="match status" value="1"/>
</dbReference>
<dbReference type="Gene3D" id="1.20.200.10">
    <property type="entry name" value="Fumarase/aspartase (Central domain)"/>
    <property type="match status" value="1"/>
</dbReference>
<dbReference type="Gene3D" id="1.10.275.10">
    <property type="entry name" value="Fumarase/aspartase (N-terminal domain)"/>
    <property type="match status" value="1"/>
</dbReference>
<dbReference type="HAMAP" id="MF_00743">
    <property type="entry name" value="FumaraseC"/>
    <property type="match status" value="1"/>
</dbReference>
<dbReference type="InterPro" id="IPR005677">
    <property type="entry name" value="Fum_hydII"/>
</dbReference>
<dbReference type="InterPro" id="IPR024083">
    <property type="entry name" value="Fumarase/histidase_N"/>
</dbReference>
<dbReference type="InterPro" id="IPR018951">
    <property type="entry name" value="Fumarase_C_C"/>
</dbReference>
<dbReference type="InterPro" id="IPR020557">
    <property type="entry name" value="Fumarate_lyase_CS"/>
</dbReference>
<dbReference type="InterPro" id="IPR000362">
    <property type="entry name" value="Fumarate_lyase_fam"/>
</dbReference>
<dbReference type="InterPro" id="IPR022761">
    <property type="entry name" value="Fumarate_lyase_N"/>
</dbReference>
<dbReference type="InterPro" id="IPR008948">
    <property type="entry name" value="L-Aspartase-like"/>
</dbReference>
<dbReference type="NCBIfam" id="TIGR00979">
    <property type="entry name" value="fumC_II"/>
    <property type="match status" value="1"/>
</dbReference>
<dbReference type="PANTHER" id="PTHR11444">
    <property type="entry name" value="ASPARTATEAMMONIA/ARGININOSUCCINATE/ADENYLOSUCCINATE LYASE"/>
    <property type="match status" value="1"/>
</dbReference>
<dbReference type="PANTHER" id="PTHR11444:SF1">
    <property type="entry name" value="FUMARATE HYDRATASE, MITOCHONDRIAL"/>
    <property type="match status" value="1"/>
</dbReference>
<dbReference type="Pfam" id="PF10415">
    <property type="entry name" value="FumaraseC_C"/>
    <property type="match status" value="1"/>
</dbReference>
<dbReference type="Pfam" id="PF00206">
    <property type="entry name" value="Lyase_1"/>
    <property type="match status" value="1"/>
</dbReference>
<dbReference type="PRINTS" id="PR00149">
    <property type="entry name" value="FUMRATELYASE"/>
</dbReference>
<dbReference type="SUPFAM" id="SSF48557">
    <property type="entry name" value="L-aspartase-like"/>
    <property type="match status" value="1"/>
</dbReference>
<dbReference type="PROSITE" id="PS00163">
    <property type="entry name" value="FUMARATE_LYASES"/>
    <property type="match status" value="1"/>
</dbReference>
<gene>
    <name evidence="1" type="primary">fumC</name>
    <name type="ordered locus">Bfl373</name>
</gene>
<proteinExistence type="inferred from homology"/>
<keyword id="KW-0963">Cytoplasm</keyword>
<keyword id="KW-0456">Lyase</keyword>
<keyword id="KW-1185">Reference proteome</keyword>
<keyword id="KW-0816">Tricarboxylic acid cycle</keyword>